<evidence type="ECO:0000250" key="1"/>
<evidence type="ECO:0000269" key="2">
    <source>
    </source>
</evidence>
<evidence type="ECO:0000305" key="3"/>
<proteinExistence type="evidence at transcript level"/>
<dbReference type="EMBL" id="AE014134">
    <property type="protein sequence ID" value="AAF52277.2"/>
    <property type="molecule type" value="Genomic_DNA"/>
</dbReference>
<dbReference type="EMBL" id="AE014134">
    <property type="protein sequence ID" value="AAN10550.2"/>
    <property type="molecule type" value="Genomic_DNA"/>
</dbReference>
<dbReference type="EMBL" id="AE014134">
    <property type="protein sequence ID" value="AAN10551.2"/>
    <property type="molecule type" value="Genomic_DNA"/>
</dbReference>
<dbReference type="EMBL" id="AY113273">
    <property type="protein sequence ID" value="AAM29278.1"/>
    <property type="molecule type" value="mRNA"/>
</dbReference>
<dbReference type="EMBL" id="BT001308">
    <property type="protein sequence ID" value="AAN71063.1"/>
    <property type="molecule type" value="mRNA"/>
</dbReference>
<dbReference type="RefSeq" id="NP_608948.2">
    <property type="nucleotide sequence ID" value="NM_135104.5"/>
</dbReference>
<dbReference type="RefSeq" id="NP_723104.2">
    <property type="nucleotide sequence ID" value="NM_164654.2"/>
</dbReference>
<dbReference type="RefSeq" id="NP_723105.2">
    <property type="nucleotide sequence ID" value="NM_164655.3"/>
</dbReference>
<dbReference type="SMR" id="Q9VMN5"/>
<dbReference type="BioGRID" id="59964">
    <property type="interactions" value="15"/>
</dbReference>
<dbReference type="DIP" id="DIP-20697N"/>
<dbReference type="FunCoup" id="Q9VMN5">
    <property type="interactions" value="1108"/>
</dbReference>
<dbReference type="IntAct" id="Q9VMN5">
    <property type="interactions" value="31"/>
</dbReference>
<dbReference type="STRING" id="7227.FBpp0078742"/>
<dbReference type="GlyGen" id="Q9VMN5">
    <property type="glycosylation" value="1 site"/>
</dbReference>
<dbReference type="PaxDb" id="7227-FBpp0078742"/>
<dbReference type="DNASU" id="33796"/>
<dbReference type="EnsemblMetazoa" id="FBtr0079110">
    <property type="protein sequence ID" value="FBpp0078742"/>
    <property type="gene ID" value="FBgn0031728"/>
</dbReference>
<dbReference type="EnsemblMetazoa" id="FBtr0079111">
    <property type="protein sequence ID" value="FBpp0078743"/>
    <property type="gene ID" value="FBgn0031728"/>
</dbReference>
<dbReference type="EnsemblMetazoa" id="FBtr0079112">
    <property type="protein sequence ID" value="FBpp0078744"/>
    <property type="gene ID" value="FBgn0031728"/>
</dbReference>
<dbReference type="GeneID" id="33796"/>
<dbReference type="KEGG" id="dme:Dmel_CG7235"/>
<dbReference type="UCSC" id="CG7235-RA">
    <property type="organism name" value="d. melanogaster"/>
</dbReference>
<dbReference type="AGR" id="FB:FBgn0031728"/>
<dbReference type="CTD" id="33796"/>
<dbReference type="FlyBase" id="FBgn0031728">
    <property type="gene designation" value="Hsp60C"/>
</dbReference>
<dbReference type="VEuPathDB" id="VectorBase:FBgn0031728"/>
<dbReference type="eggNOG" id="KOG0356">
    <property type="taxonomic scope" value="Eukaryota"/>
</dbReference>
<dbReference type="GeneTree" id="ENSGT00390000005727"/>
<dbReference type="HOGENOM" id="CLU_016503_3_0_1"/>
<dbReference type="InParanoid" id="Q9VMN5"/>
<dbReference type="OMA" id="PYILIHQ"/>
<dbReference type="OrthoDB" id="1733909at2759"/>
<dbReference type="PhylomeDB" id="Q9VMN5"/>
<dbReference type="SignaLink" id="Q9VMN5"/>
<dbReference type="BioGRID-ORCS" id="33796">
    <property type="hits" value="0 hits in 1 CRISPR screen"/>
</dbReference>
<dbReference type="ChiTaRS" id="Hsp60C">
    <property type="organism name" value="fly"/>
</dbReference>
<dbReference type="GenomeRNAi" id="33796"/>
<dbReference type="PRO" id="PR:Q9VMN5"/>
<dbReference type="Proteomes" id="UP000000803">
    <property type="component" value="Chromosome 2L"/>
</dbReference>
<dbReference type="Bgee" id="FBgn0031728">
    <property type="expression patterns" value="Expressed in early elongation stage spermatid (Drosophila) in testis and 36 other cell types or tissues"/>
</dbReference>
<dbReference type="GO" id="GO:0005743">
    <property type="term" value="C:mitochondrial inner membrane"/>
    <property type="evidence" value="ECO:0000318"/>
    <property type="project" value="GO_Central"/>
</dbReference>
<dbReference type="GO" id="GO:0005759">
    <property type="term" value="C:mitochondrial matrix"/>
    <property type="evidence" value="ECO:0000318"/>
    <property type="project" value="GO_Central"/>
</dbReference>
<dbReference type="GO" id="GO:0005524">
    <property type="term" value="F:ATP binding"/>
    <property type="evidence" value="ECO:0007669"/>
    <property type="project" value="UniProtKB-KW"/>
</dbReference>
<dbReference type="GO" id="GO:0016887">
    <property type="term" value="F:ATP hydrolysis activity"/>
    <property type="evidence" value="ECO:0000250"/>
    <property type="project" value="FlyBase"/>
</dbReference>
<dbReference type="GO" id="GO:0140662">
    <property type="term" value="F:ATP-dependent protein folding chaperone"/>
    <property type="evidence" value="ECO:0007669"/>
    <property type="project" value="InterPro"/>
</dbReference>
<dbReference type="GO" id="GO:0051087">
    <property type="term" value="F:protein-folding chaperone binding"/>
    <property type="evidence" value="ECO:0000318"/>
    <property type="project" value="GO_Central"/>
</dbReference>
<dbReference type="GO" id="GO:0008637">
    <property type="term" value="P:apoptotic mitochondrial changes"/>
    <property type="evidence" value="ECO:0000318"/>
    <property type="project" value="GO_Central"/>
</dbReference>
<dbReference type="GO" id="GO:0007301">
    <property type="term" value="P:female germline ring canal formation"/>
    <property type="evidence" value="ECO:0000315"/>
    <property type="project" value="FlyBase"/>
</dbReference>
<dbReference type="GO" id="GO:0030707">
    <property type="term" value="P:follicle cell of egg chamber development"/>
    <property type="evidence" value="ECO:0000315"/>
    <property type="project" value="FlyBase"/>
</dbReference>
<dbReference type="GO" id="GO:0034514">
    <property type="term" value="P:mitochondrial unfolded protein response"/>
    <property type="evidence" value="ECO:0000318"/>
    <property type="project" value="GO_Central"/>
</dbReference>
<dbReference type="GO" id="GO:0048477">
    <property type="term" value="P:oogenesis"/>
    <property type="evidence" value="ECO:0000315"/>
    <property type="project" value="FlyBase"/>
</dbReference>
<dbReference type="GO" id="GO:0007424">
    <property type="term" value="P:open tracheal system development"/>
    <property type="evidence" value="ECO:0000315"/>
    <property type="project" value="FlyBase"/>
</dbReference>
<dbReference type="GO" id="GO:0006457">
    <property type="term" value="P:protein folding"/>
    <property type="evidence" value="ECO:0000318"/>
    <property type="project" value="GO_Central"/>
</dbReference>
<dbReference type="GO" id="GO:0045041">
    <property type="term" value="P:protein import into mitochondrial intermembrane space"/>
    <property type="evidence" value="ECO:0000318"/>
    <property type="project" value="GO_Central"/>
</dbReference>
<dbReference type="GO" id="GO:0042026">
    <property type="term" value="P:protein refolding"/>
    <property type="evidence" value="ECO:0007669"/>
    <property type="project" value="InterPro"/>
</dbReference>
<dbReference type="GO" id="GO:0007283">
    <property type="term" value="P:spermatogenesis"/>
    <property type="evidence" value="ECO:0000315"/>
    <property type="project" value="FlyBase"/>
</dbReference>
<dbReference type="CDD" id="cd03344">
    <property type="entry name" value="GroEL"/>
    <property type="match status" value="1"/>
</dbReference>
<dbReference type="FunFam" id="3.50.7.10:FF:000001">
    <property type="entry name" value="60 kDa chaperonin"/>
    <property type="match status" value="1"/>
</dbReference>
<dbReference type="FunFam" id="3.30.260.10:FF:000019">
    <property type="entry name" value="60 kDa heat shock mitochondrial"/>
    <property type="match status" value="1"/>
</dbReference>
<dbReference type="FunFam" id="1.10.560.10:FF:000031">
    <property type="entry name" value="60 kDa heat shock protein, mitochondrial"/>
    <property type="match status" value="1"/>
</dbReference>
<dbReference type="Gene3D" id="3.50.7.10">
    <property type="entry name" value="GroEL"/>
    <property type="match status" value="1"/>
</dbReference>
<dbReference type="Gene3D" id="1.10.560.10">
    <property type="entry name" value="GroEL-like equatorial domain"/>
    <property type="match status" value="1"/>
</dbReference>
<dbReference type="Gene3D" id="3.30.260.10">
    <property type="entry name" value="TCP-1-like chaperonin intermediate domain"/>
    <property type="match status" value="1"/>
</dbReference>
<dbReference type="HAMAP" id="MF_00600">
    <property type="entry name" value="CH60"/>
    <property type="match status" value="1"/>
</dbReference>
<dbReference type="InterPro" id="IPR018370">
    <property type="entry name" value="Chaperonin_Cpn60_CS"/>
</dbReference>
<dbReference type="InterPro" id="IPR001844">
    <property type="entry name" value="Cpn60/GroEL"/>
</dbReference>
<dbReference type="InterPro" id="IPR002423">
    <property type="entry name" value="Cpn60/GroEL/TCP-1"/>
</dbReference>
<dbReference type="InterPro" id="IPR027409">
    <property type="entry name" value="GroEL-like_apical_dom_sf"/>
</dbReference>
<dbReference type="InterPro" id="IPR027413">
    <property type="entry name" value="GROEL-like_equatorial_sf"/>
</dbReference>
<dbReference type="InterPro" id="IPR027410">
    <property type="entry name" value="TCP-1-like_intermed_sf"/>
</dbReference>
<dbReference type="NCBIfam" id="TIGR02348">
    <property type="entry name" value="GroEL"/>
    <property type="match status" value="1"/>
</dbReference>
<dbReference type="NCBIfam" id="NF000592">
    <property type="entry name" value="PRK00013.1"/>
    <property type="match status" value="1"/>
</dbReference>
<dbReference type="NCBIfam" id="NF009487">
    <property type="entry name" value="PRK12849.1"/>
    <property type="match status" value="1"/>
</dbReference>
<dbReference type="NCBIfam" id="NF009488">
    <property type="entry name" value="PRK12850.1"/>
    <property type="match status" value="1"/>
</dbReference>
<dbReference type="NCBIfam" id="NF009489">
    <property type="entry name" value="PRK12851.1"/>
    <property type="match status" value="1"/>
</dbReference>
<dbReference type="PANTHER" id="PTHR45633">
    <property type="entry name" value="60 KDA HEAT SHOCK PROTEIN, MITOCHONDRIAL"/>
    <property type="match status" value="1"/>
</dbReference>
<dbReference type="Pfam" id="PF00118">
    <property type="entry name" value="Cpn60_TCP1"/>
    <property type="match status" value="1"/>
</dbReference>
<dbReference type="PRINTS" id="PR00298">
    <property type="entry name" value="CHAPERONIN60"/>
</dbReference>
<dbReference type="SUPFAM" id="SSF52029">
    <property type="entry name" value="GroEL apical domain-like"/>
    <property type="match status" value="1"/>
</dbReference>
<dbReference type="SUPFAM" id="SSF48592">
    <property type="entry name" value="GroEL equatorial domain-like"/>
    <property type="match status" value="1"/>
</dbReference>
<dbReference type="SUPFAM" id="SSF54849">
    <property type="entry name" value="GroEL-intermediate domain like"/>
    <property type="match status" value="1"/>
</dbReference>
<dbReference type="PROSITE" id="PS00296">
    <property type="entry name" value="CHAPERONINS_CPN60"/>
    <property type="match status" value="1"/>
</dbReference>
<organism>
    <name type="scientific">Drosophila melanogaster</name>
    <name type="common">Fruit fly</name>
    <dbReference type="NCBI Taxonomy" id="7227"/>
    <lineage>
        <taxon>Eukaryota</taxon>
        <taxon>Metazoa</taxon>
        <taxon>Ecdysozoa</taxon>
        <taxon>Arthropoda</taxon>
        <taxon>Hexapoda</taxon>
        <taxon>Insecta</taxon>
        <taxon>Pterygota</taxon>
        <taxon>Neoptera</taxon>
        <taxon>Endopterygota</taxon>
        <taxon>Diptera</taxon>
        <taxon>Brachycera</taxon>
        <taxon>Muscomorpha</taxon>
        <taxon>Ephydroidea</taxon>
        <taxon>Drosophilidae</taxon>
        <taxon>Drosophila</taxon>
        <taxon>Sophophora</taxon>
    </lineage>
</organism>
<gene>
    <name type="primary">Hsp60C</name>
    <name type="ORF">CG7235</name>
</gene>
<accession>Q9VMN5</accession>
<accession>A4V087</accession>
<accession>Q8IHD0</accession>
<accession>Q8MZB0</accession>
<protein>
    <recommendedName>
        <fullName>60 kDa heat shock protein homolog 2, mitochondrial</fullName>
    </recommendedName>
    <alternativeName>
        <fullName>60 kDa chaperonin</fullName>
    </alternativeName>
    <alternativeName>
        <fullName>CPN60</fullName>
    </alternativeName>
    <alternativeName>
        <fullName>Heat shock protein 60</fullName>
        <shortName>HSP-60</shortName>
    </alternativeName>
    <alternativeName>
        <fullName>Hsp60</fullName>
    </alternativeName>
</protein>
<reference key="1">
    <citation type="journal article" date="2000" name="Science">
        <title>The genome sequence of Drosophila melanogaster.</title>
        <authorList>
            <person name="Adams M.D."/>
            <person name="Celniker S.E."/>
            <person name="Holt R.A."/>
            <person name="Evans C.A."/>
            <person name="Gocayne J.D."/>
            <person name="Amanatides P.G."/>
            <person name="Scherer S.E."/>
            <person name="Li P.W."/>
            <person name="Hoskins R.A."/>
            <person name="Galle R.F."/>
            <person name="George R.A."/>
            <person name="Lewis S.E."/>
            <person name="Richards S."/>
            <person name="Ashburner M."/>
            <person name="Henderson S.N."/>
            <person name="Sutton G.G."/>
            <person name="Wortman J.R."/>
            <person name="Yandell M.D."/>
            <person name="Zhang Q."/>
            <person name="Chen L.X."/>
            <person name="Brandon R.C."/>
            <person name="Rogers Y.-H.C."/>
            <person name="Blazej R.G."/>
            <person name="Champe M."/>
            <person name="Pfeiffer B.D."/>
            <person name="Wan K.H."/>
            <person name="Doyle C."/>
            <person name="Baxter E.G."/>
            <person name="Helt G."/>
            <person name="Nelson C.R."/>
            <person name="Miklos G.L.G."/>
            <person name="Abril J.F."/>
            <person name="Agbayani A."/>
            <person name="An H.-J."/>
            <person name="Andrews-Pfannkoch C."/>
            <person name="Baldwin D."/>
            <person name="Ballew R.M."/>
            <person name="Basu A."/>
            <person name="Baxendale J."/>
            <person name="Bayraktaroglu L."/>
            <person name="Beasley E.M."/>
            <person name="Beeson K.Y."/>
            <person name="Benos P.V."/>
            <person name="Berman B.P."/>
            <person name="Bhandari D."/>
            <person name="Bolshakov S."/>
            <person name="Borkova D."/>
            <person name="Botchan M.R."/>
            <person name="Bouck J."/>
            <person name="Brokstein P."/>
            <person name="Brottier P."/>
            <person name="Burtis K.C."/>
            <person name="Busam D.A."/>
            <person name="Butler H."/>
            <person name="Cadieu E."/>
            <person name="Center A."/>
            <person name="Chandra I."/>
            <person name="Cherry J.M."/>
            <person name="Cawley S."/>
            <person name="Dahlke C."/>
            <person name="Davenport L.B."/>
            <person name="Davies P."/>
            <person name="de Pablos B."/>
            <person name="Delcher A."/>
            <person name="Deng Z."/>
            <person name="Mays A.D."/>
            <person name="Dew I."/>
            <person name="Dietz S.M."/>
            <person name="Dodson K."/>
            <person name="Doup L.E."/>
            <person name="Downes M."/>
            <person name="Dugan-Rocha S."/>
            <person name="Dunkov B.C."/>
            <person name="Dunn P."/>
            <person name="Durbin K.J."/>
            <person name="Evangelista C.C."/>
            <person name="Ferraz C."/>
            <person name="Ferriera S."/>
            <person name="Fleischmann W."/>
            <person name="Fosler C."/>
            <person name="Gabrielian A.E."/>
            <person name="Garg N.S."/>
            <person name="Gelbart W.M."/>
            <person name="Glasser K."/>
            <person name="Glodek A."/>
            <person name="Gong F."/>
            <person name="Gorrell J.H."/>
            <person name="Gu Z."/>
            <person name="Guan P."/>
            <person name="Harris M."/>
            <person name="Harris N.L."/>
            <person name="Harvey D.A."/>
            <person name="Heiman T.J."/>
            <person name="Hernandez J.R."/>
            <person name="Houck J."/>
            <person name="Hostin D."/>
            <person name="Houston K.A."/>
            <person name="Howland T.J."/>
            <person name="Wei M.-H."/>
            <person name="Ibegwam C."/>
            <person name="Jalali M."/>
            <person name="Kalush F."/>
            <person name="Karpen G.H."/>
            <person name="Ke Z."/>
            <person name="Kennison J.A."/>
            <person name="Ketchum K.A."/>
            <person name="Kimmel B.E."/>
            <person name="Kodira C.D."/>
            <person name="Kraft C.L."/>
            <person name="Kravitz S."/>
            <person name="Kulp D."/>
            <person name="Lai Z."/>
            <person name="Lasko P."/>
            <person name="Lei Y."/>
            <person name="Levitsky A.A."/>
            <person name="Li J.H."/>
            <person name="Li Z."/>
            <person name="Liang Y."/>
            <person name="Lin X."/>
            <person name="Liu X."/>
            <person name="Mattei B."/>
            <person name="McIntosh T.C."/>
            <person name="McLeod M.P."/>
            <person name="McPherson D."/>
            <person name="Merkulov G."/>
            <person name="Milshina N.V."/>
            <person name="Mobarry C."/>
            <person name="Morris J."/>
            <person name="Moshrefi A."/>
            <person name="Mount S.M."/>
            <person name="Moy M."/>
            <person name="Murphy B."/>
            <person name="Murphy L."/>
            <person name="Muzny D.M."/>
            <person name="Nelson D.L."/>
            <person name="Nelson D.R."/>
            <person name="Nelson K.A."/>
            <person name="Nixon K."/>
            <person name="Nusskern D.R."/>
            <person name="Pacleb J.M."/>
            <person name="Palazzolo M."/>
            <person name="Pittman G.S."/>
            <person name="Pan S."/>
            <person name="Pollard J."/>
            <person name="Puri V."/>
            <person name="Reese M.G."/>
            <person name="Reinert K."/>
            <person name="Remington K."/>
            <person name="Saunders R.D.C."/>
            <person name="Scheeler F."/>
            <person name="Shen H."/>
            <person name="Shue B.C."/>
            <person name="Siden-Kiamos I."/>
            <person name="Simpson M."/>
            <person name="Skupski M.P."/>
            <person name="Smith T.J."/>
            <person name="Spier E."/>
            <person name="Spradling A.C."/>
            <person name="Stapleton M."/>
            <person name="Strong R."/>
            <person name="Sun E."/>
            <person name="Svirskas R."/>
            <person name="Tector C."/>
            <person name="Turner R."/>
            <person name="Venter E."/>
            <person name="Wang A.H."/>
            <person name="Wang X."/>
            <person name="Wang Z.-Y."/>
            <person name="Wassarman D.A."/>
            <person name="Weinstock G.M."/>
            <person name="Weissenbach J."/>
            <person name="Williams S.M."/>
            <person name="Woodage T."/>
            <person name="Worley K.C."/>
            <person name="Wu D."/>
            <person name="Yang S."/>
            <person name="Yao Q.A."/>
            <person name="Ye J."/>
            <person name="Yeh R.-F."/>
            <person name="Zaveri J.S."/>
            <person name="Zhan M."/>
            <person name="Zhang G."/>
            <person name="Zhao Q."/>
            <person name="Zheng L."/>
            <person name="Zheng X.H."/>
            <person name="Zhong F.N."/>
            <person name="Zhong W."/>
            <person name="Zhou X."/>
            <person name="Zhu S.C."/>
            <person name="Zhu X."/>
            <person name="Smith H.O."/>
            <person name="Gibbs R.A."/>
            <person name="Myers E.W."/>
            <person name="Rubin G.M."/>
            <person name="Venter J.C."/>
        </authorList>
    </citation>
    <scope>NUCLEOTIDE SEQUENCE [LARGE SCALE GENOMIC DNA]</scope>
    <source>
        <strain>Berkeley</strain>
    </source>
</reference>
<reference key="2">
    <citation type="journal article" date="2002" name="Genome Biol.">
        <title>Annotation of the Drosophila melanogaster euchromatic genome: a systematic review.</title>
        <authorList>
            <person name="Misra S."/>
            <person name="Crosby M.A."/>
            <person name="Mungall C.J."/>
            <person name="Matthews B.B."/>
            <person name="Campbell K.S."/>
            <person name="Hradecky P."/>
            <person name="Huang Y."/>
            <person name="Kaminker J.S."/>
            <person name="Millburn G.H."/>
            <person name="Prochnik S.E."/>
            <person name="Smith C.D."/>
            <person name="Tupy J.L."/>
            <person name="Whitfield E.J."/>
            <person name="Bayraktaroglu L."/>
            <person name="Berman B.P."/>
            <person name="Bettencourt B.R."/>
            <person name="Celniker S.E."/>
            <person name="de Grey A.D.N.J."/>
            <person name="Drysdale R.A."/>
            <person name="Harris N.L."/>
            <person name="Richter J."/>
            <person name="Russo S."/>
            <person name="Schroeder A.J."/>
            <person name="Shu S.Q."/>
            <person name="Stapleton M."/>
            <person name="Yamada C."/>
            <person name="Ashburner M."/>
            <person name="Gelbart W.M."/>
            <person name="Rubin G.M."/>
            <person name="Lewis S.E."/>
        </authorList>
    </citation>
    <scope>GENOME REANNOTATION</scope>
    <source>
        <strain>Berkeley</strain>
    </source>
</reference>
<reference key="3">
    <citation type="journal article" date="2002" name="Genome Biol.">
        <title>A Drosophila full-length cDNA resource.</title>
        <authorList>
            <person name="Stapleton M."/>
            <person name="Carlson J.W."/>
            <person name="Brokstein P."/>
            <person name="Yu C."/>
            <person name="Champe M."/>
            <person name="George R.A."/>
            <person name="Guarin H."/>
            <person name="Kronmiller B."/>
            <person name="Pacleb J.M."/>
            <person name="Park S."/>
            <person name="Wan K.H."/>
            <person name="Rubin G.M."/>
            <person name="Celniker S.E."/>
        </authorList>
    </citation>
    <scope>NUCLEOTIDE SEQUENCE [LARGE SCALE MRNA]</scope>
    <source>
        <strain>Berkeley</strain>
        <tissue>Testis</tissue>
    </source>
</reference>
<reference key="4">
    <citation type="journal article" date="2005" name="J. Genet.">
        <title>The Hsp60C gene in the 25F cytogenetic region in Drosophila melanogaster is essential for tracheal development and fertility.</title>
        <authorList>
            <person name="Sarkar S."/>
            <person name="Lakhotia S.C."/>
        </authorList>
    </citation>
    <scope>FUNCTION</scope>
    <scope>TISSUE SPECIFICITY</scope>
    <scope>DEVELOPMENTAL STAGE</scope>
    <scope>DISRUPTION PHENOTYPE</scope>
</reference>
<feature type="transit peptide" description="Mitochondrion" evidence="1">
    <location>
        <begin position="1"/>
        <end position="61"/>
    </location>
</feature>
<feature type="chain" id="PRO_0000005033" description="60 kDa heat shock protein homolog 2, mitochondrial">
    <location>
        <begin position="62"/>
        <end position="576"/>
    </location>
</feature>
<feature type="sequence conflict" description="In Ref. 3; AAM29278." evidence="3" ref="3">
    <original>R</original>
    <variation>Q</variation>
    <location>
        <position position="160"/>
    </location>
</feature>
<keyword id="KW-0067">ATP-binding</keyword>
<keyword id="KW-0143">Chaperone</keyword>
<keyword id="KW-0217">Developmental protein</keyword>
<keyword id="KW-0221">Differentiation</keyword>
<keyword id="KW-0496">Mitochondrion</keyword>
<keyword id="KW-0547">Nucleotide-binding</keyword>
<keyword id="KW-0896">Oogenesis</keyword>
<keyword id="KW-1185">Reference proteome</keyword>
<keyword id="KW-0744">Spermatogenesis</keyword>
<keyword id="KW-0809">Transit peptide</keyword>
<comment type="function">
    <text evidence="1 2">Prevents misfolding and promotes the refolding and proper assembly of unfolded polypeptides generated under stress conditions (By similarity). Essential for proper development of trachea, spermatogonia and spermatocytes.</text>
</comment>
<comment type="subcellular location">
    <subcellularLocation>
        <location evidence="1">Mitochondrion matrix</location>
    </subcellularLocation>
</comment>
<comment type="tissue specificity">
    <text evidence="2">First detectable expression is seen in the posterior part of the dorsal tracheal trunk at stage 14-15, which marks the beginning of terminal tracheation. In the larval gut, expression in proventriculus is stronger than in midgut and hindgut. Malpighian tubules shows low expression and late third instar larval imaginal disks and brain showed moderate expression. In larval ovary and testis, expression is strong in the posterior region.</text>
</comment>
<comment type="developmental stage">
    <text evidence="2">Expression first seen in late embryonic stages and continues in larval and adult stages.</text>
</comment>
<comment type="disruption phenotype">
    <text evidence="2">Flies are male and female sterile; reduction in numbers of primary and secondary spermatocytes.</text>
</comment>
<comment type="similarity">
    <text evidence="3">Belongs to the chaperonin (HSP60) family.</text>
</comment>
<name>CH60C_DROME</name>
<sequence length="576" mass="61587">MMRMFRYTNTLQRTAKISHVLWARNYAKDVRFGPEVRAMMLQGVDVLADAVAVTMGPKGRNVIIEQSWGSPKITKDGVTVAKSIALKDKFQNIGAKLVQDVANNTNEEAGDGTTTATVLARAIAKEGFEKISRGASPVEIRRGVMLAIETVKDNLRRLSRPVNTPEEICQVATISANGDKSVGNLISEAIKKVGRDGVITVKDGKTLCDELEVIEGMKFDRGYISPYFINTSKGAKVEFQDALLLFCEKKIKSAPSIVPALELANAQRKPLVIIAEDLEAEALSTLVVNRLKVGLQVCAVKAPGFGDNRKENLMDMAVATGGIVFGDEANMVRLEDIKMSDFGRVGEVVVSKDDTMLLKGKGQKAEVEKRVEGLREAIKESTSSYEKEKMQERLARLSSGVALLRVGGSSDVEVSEKKDRVIDALNATRAAVEEGIVPGGGTALLRCIQKLNDLKGANEDQNMGIEIIRRALRMPCLTIAKNAGVDGAMVVAKVEILDGDYGYDALKGEYGNMIERGIIDPTKVVRTAISDAAGVASLLTTAEAVVTELPLEEAAAAGAAAGLGALGGMGMGGMGM</sequence>